<reference key="1">
    <citation type="journal article" date="2001" name="Nature">
        <title>Genome sequence and gene compaction of the eukaryote parasite Encephalitozoon cuniculi.</title>
        <authorList>
            <person name="Katinka M.D."/>
            <person name="Duprat S."/>
            <person name="Cornillot E."/>
            <person name="Metenier G."/>
            <person name="Thomarat F."/>
            <person name="Prensier G."/>
            <person name="Barbe V."/>
            <person name="Peyretaillade E."/>
            <person name="Brottier P."/>
            <person name="Wincker P."/>
            <person name="Delbac F."/>
            <person name="El Alaoui H."/>
            <person name="Peyret P."/>
            <person name="Saurin W."/>
            <person name="Gouy M."/>
            <person name="Weissenbach J."/>
            <person name="Vivares C.P."/>
        </authorList>
    </citation>
    <scope>NUCLEOTIDE SEQUENCE [LARGE SCALE GENOMIC DNA]</scope>
    <source>
        <strain>GB-M1</strain>
    </source>
</reference>
<reference key="2">
    <citation type="journal article" date="2007" name="BMC Genomics">
        <title>The complement of protein kinases of the microsporidium Encephalitozoon cuniculi in relation to those of Saccharomyces cerevisiae and Schizosaccharomyces pombe.</title>
        <authorList>
            <person name="Miranda-Saavedra D."/>
            <person name="Stark M.J.R."/>
            <person name="Packer J.C."/>
            <person name="Vivares C.P."/>
            <person name="Doerig C."/>
            <person name="Barton G.J."/>
        </authorList>
    </citation>
    <scope>PREDICTION OF FUNCTION</scope>
</reference>
<organism>
    <name type="scientific">Encephalitozoon cuniculi (strain GB-M1)</name>
    <name type="common">Microsporidian parasite</name>
    <dbReference type="NCBI Taxonomy" id="284813"/>
    <lineage>
        <taxon>Eukaryota</taxon>
        <taxon>Fungi</taxon>
        <taxon>Fungi incertae sedis</taxon>
        <taxon>Microsporidia</taxon>
        <taxon>Unikaryonidae</taxon>
        <taxon>Encephalitozoon</taxon>
    </lineage>
</organism>
<dbReference type="EC" id="2.7.11.1"/>
<dbReference type="EMBL" id="AL590448">
    <property type="protein sequence ID" value="CAD26498.1"/>
    <property type="molecule type" value="Genomic_DNA"/>
</dbReference>
<dbReference type="RefSeq" id="NP_597322.1">
    <property type="nucleotide sequence ID" value="NM_001041931.1"/>
</dbReference>
<dbReference type="SMR" id="Q8SR85"/>
<dbReference type="FunCoup" id="Q8SR85">
    <property type="interactions" value="142"/>
</dbReference>
<dbReference type="STRING" id="284813.Q8SR85"/>
<dbReference type="GeneID" id="859744"/>
<dbReference type="KEGG" id="ecu:ECU08_1960"/>
<dbReference type="VEuPathDB" id="MicrosporidiaDB:ECU08_1960"/>
<dbReference type="HOGENOM" id="CLU_000288_118_2_1"/>
<dbReference type="InParanoid" id="Q8SR85"/>
<dbReference type="OMA" id="QGFTMEK"/>
<dbReference type="OrthoDB" id="10020333at2759"/>
<dbReference type="Proteomes" id="UP000000819">
    <property type="component" value="Chromosome VIII"/>
</dbReference>
<dbReference type="GO" id="GO:0005829">
    <property type="term" value="C:cytosol"/>
    <property type="evidence" value="ECO:0007669"/>
    <property type="project" value="TreeGrafter"/>
</dbReference>
<dbReference type="GO" id="GO:0005634">
    <property type="term" value="C:nucleus"/>
    <property type="evidence" value="ECO:0007669"/>
    <property type="project" value="TreeGrafter"/>
</dbReference>
<dbReference type="GO" id="GO:0005956">
    <property type="term" value="C:protein kinase CK2 complex"/>
    <property type="evidence" value="ECO:0007669"/>
    <property type="project" value="TreeGrafter"/>
</dbReference>
<dbReference type="GO" id="GO:0005524">
    <property type="term" value="F:ATP binding"/>
    <property type="evidence" value="ECO:0007669"/>
    <property type="project" value="UniProtKB-KW"/>
</dbReference>
<dbReference type="GO" id="GO:0046872">
    <property type="term" value="F:metal ion binding"/>
    <property type="evidence" value="ECO:0007669"/>
    <property type="project" value="UniProtKB-KW"/>
</dbReference>
<dbReference type="GO" id="GO:0106310">
    <property type="term" value="F:protein serine kinase activity"/>
    <property type="evidence" value="ECO:0007669"/>
    <property type="project" value="RHEA"/>
</dbReference>
<dbReference type="GO" id="GO:0004674">
    <property type="term" value="F:protein serine/threonine kinase activity"/>
    <property type="evidence" value="ECO:0007669"/>
    <property type="project" value="UniProtKB-KW"/>
</dbReference>
<dbReference type="GO" id="GO:0051301">
    <property type="term" value="P:cell division"/>
    <property type="evidence" value="ECO:0007669"/>
    <property type="project" value="UniProtKB-KW"/>
</dbReference>
<dbReference type="GO" id="GO:0051321">
    <property type="term" value="P:meiotic cell cycle"/>
    <property type="evidence" value="ECO:0007669"/>
    <property type="project" value="UniProtKB-KW"/>
</dbReference>
<dbReference type="GO" id="GO:0051726">
    <property type="term" value="P:regulation of cell cycle"/>
    <property type="evidence" value="ECO:0007669"/>
    <property type="project" value="TreeGrafter"/>
</dbReference>
<dbReference type="CDD" id="cd14019">
    <property type="entry name" value="STKc_Cdc7"/>
    <property type="match status" value="1"/>
</dbReference>
<dbReference type="Gene3D" id="3.30.200.20">
    <property type="entry name" value="Phosphorylase Kinase, domain 1"/>
    <property type="match status" value="1"/>
</dbReference>
<dbReference type="Gene3D" id="1.10.510.10">
    <property type="entry name" value="Transferase(Phosphotransferase) domain 1"/>
    <property type="match status" value="1"/>
</dbReference>
<dbReference type="InterPro" id="IPR045216">
    <property type="entry name" value="CK2_alpha"/>
</dbReference>
<dbReference type="InterPro" id="IPR011009">
    <property type="entry name" value="Kinase-like_dom_sf"/>
</dbReference>
<dbReference type="InterPro" id="IPR000719">
    <property type="entry name" value="Prot_kinase_dom"/>
</dbReference>
<dbReference type="InterPro" id="IPR017441">
    <property type="entry name" value="Protein_kinase_ATP_BS"/>
</dbReference>
<dbReference type="InterPro" id="IPR008271">
    <property type="entry name" value="Ser/Thr_kinase_AS"/>
</dbReference>
<dbReference type="PANTHER" id="PTHR24054">
    <property type="entry name" value="CASEIN KINASE II SUBUNIT ALPHA"/>
    <property type="match status" value="1"/>
</dbReference>
<dbReference type="PANTHER" id="PTHR24054:SF0">
    <property type="entry name" value="CASEIN KINASE II SUBUNIT ALPHA"/>
    <property type="match status" value="1"/>
</dbReference>
<dbReference type="Pfam" id="PF00069">
    <property type="entry name" value="Pkinase"/>
    <property type="match status" value="2"/>
</dbReference>
<dbReference type="SMART" id="SM00220">
    <property type="entry name" value="S_TKc"/>
    <property type="match status" value="1"/>
</dbReference>
<dbReference type="SUPFAM" id="SSF56112">
    <property type="entry name" value="Protein kinase-like (PK-like)"/>
    <property type="match status" value="1"/>
</dbReference>
<dbReference type="PROSITE" id="PS00107">
    <property type="entry name" value="PROTEIN_KINASE_ATP"/>
    <property type="match status" value="1"/>
</dbReference>
<dbReference type="PROSITE" id="PS50011">
    <property type="entry name" value="PROTEIN_KINASE_DOM"/>
    <property type="match status" value="1"/>
</dbReference>
<dbReference type="PROSITE" id="PS00108">
    <property type="entry name" value="PROTEIN_KINASE_ST"/>
    <property type="match status" value="1"/>
</dbReference>
<comment type="function">
    <text evidence="1">Serine/threonine-protein kinase. Needed for the initiation of DNA synthesis during mitosis as well as for synaptonemal complex formation and commitment to recombination during meiosis (By similarity).</text>
</comment>
<comment type="catalytic activity">
    <reaction>
        <text>L-seryl-[protein] + ATP = O-phospho-L-seryl-[protein] + ADP + H(+)</text>
        <dbReference type="Rhea" id="RHEA:17989"/>
        <dbReference type="Rhea" id="RHEA-COMP:9863"/>
        <dbReference type="Rhea" id="RHEA-COMP:11604"/>
        <dbReference type="ChEBI" id="CHEBI:15378"/>
        <dbReference type="ChEBI" id="CHEBI:29999"/>
        <dbReference type="ChEBI" id="CHEBI:30616"/>
        <dbReference type="ChEBI" id="CHEBI:83421"/>
        <dbReference type="ChEBI" id="CHEBI:456216"/>
        <dbReference type="EC" id="2.7.11.1"/>
    </reaction>
</comment>
<comment type="catalytic activity">
    <reaction>
        <text>L-threonyl-[protein] + ATP = O-phospho-L-threonyl-[protein] + ADP + H(+)</text>
        <dbReference type="Rhea" id="RHEA:46608"/>
        <dbReference type="Rhea" id="RHEA-COMP:11060"/>
        <dbReference type="Rhea" id="RHEA-COMP:11605"/>
        <dbReference type="ChEBI" id="CHEBI:15378"/>
        <dbReference type="ChEBI" id="CHEBI:30013"/>
        <dbReference type="ChEBI" id="CHEBI:30616"/>
        <dbReference type="ChEBI" id="CHEBI:61977"/>
        <dbReference type="ChEBI" id="CHEBI:456216"/>
        <dbReference type="EC" id="2.7.11.1"/>
    </reaction>
</comment>
<comment type="cofactor">
    <cofactor evidence="1">
        <name>Mg(2+)</name>
        <dbReference type="ChEBI" id="CHEBI:18420"/>
    </cofactor>
</comment>
<comment type="similarity">
    <text evidence="2">Belongs to the protein kinase superfamily. Ser/Thr protein kinase family. CDC7 subfamily.</text>
</comment>
<sequence>MEEEKILESDLRHISFVMPKYTPIEKIGEGSFSVVYKALDAESGRYVALKAITRTSSPARVLDEMMFLKTLGGRKNCMGLLGCFRNEDQVVAVFPYFEPIDFREFISNANLADIKRYLHNLLIAIEHVHSNGIMHRDLKPGNFLYNKESGRGMLIDFGLAQYEEYSEGQHAEGGAKPAGPLLFFNSVVSKTKPPGYYERDGRPPMKAPRAGTRGFRAPEVLFRCQRQTGAIDMWSVGVIFLTILTTQYPFFYSSDDIDSIVEIATIFGHAEMRKAAKFYGRVWRSNIDSIPEERIPFETIVESLNPWAEIGSDGYDLLYRMLDLCSSSRITASDALSHPFFDDLKTHENCA</sequence>
<feature type="chain" id="PRO_0000384419" description="Probable cell division control protein 7 homolog 1">
    <location>
        <begin position="1"/>
        <end position="351"/>
    </location>
</feature>
<feature type="domain" description="Protein kinase" evidence="2">
    <location>
        <begin position="21"/>
        <end position="341"/>
    </location>
</feature>
<feature type="active site" description="Proton acceptor" evidence="2 3">
    <location>
        <position position="137"/>
    </location>
</feature>
<feature type="binding site" evidence="2">
    <location>
        <begin position="27"/>
        <end position="35"/>
    </location>
    <ligand>
        <name>ATP</name>
        <dbReference type="ChEBI" id="CHEBI:30616"/>
    </ligand>
</feature>
<feature type="binding site" evidence="2">
    <location>
        <position position="50"/>
    </location>
    <ligand>
        <name>ATP</name>
        <dbReference type="ChEBI" id="CHEBI:30616"/>
    </ligand>
</feature>
<evidence type="ECO:0000250" key="1"/>
<evidence type="ECO:0000255" key="2">
    <source>
        <dbReference type="PROSITE-ProRule" id="PRU00159"/>
    </source>
</evidence>
<evidence type="ECO:0000255" key="3">
    <source>
        <dbReference type="PROSITE-ProRule" id="PRU10027"/>
    </source>
</evidence>
<accession>Q8SR85</accession>
<keyword id="KW-0067">ATP-binding</keyword>
<keyword id="KW-0131">Cell cycle</keyword>
<keyword id="KW-0132">Cell division</keyword>
<keyword id="KW-0418">Kinase</keyword>
<keyword id="KW-0460">Magnesium</keyword>
<keyword id="KW-0469">Meiosis</keyword>
<keyword id="KW-0479">Metal-binding</keyword>
<keyword id="KW-0498">Mitosis</keyword>
<keyword id="KW-0547">Nucleotide-binding</keyword>
<keyword id="KW-1185">Reference proteome</keyword>
<keyword id="KW-0723">Serine/threonine-protein kinase</keyword>
<keyword id="KW-0808">Transferase</keyword>
<name>CDC71_ENCCU</name>
<protein>
    <recommendedName>
        <fullName>Probable cell division control protein 7 homolog 1</fullName>
        <ecNumber>2.7.11.1</ecNumber>
    </recommendedName>
</protein>
<proteinExistence type="inferred from homology"/>
<gene>
    <name type="primary">CDC7-1</name>
    <name type="ordered locus">ECU08_1960</name>
</gene>